<sequence>MINVYFSDNSCKQFLPGIKGSDIITHLFPELLNKAIAIKINDKSLDLSTEITEDCKFEVITLDSDEGLDIIRHDTAHIMAQAIKEMFPEVKTVVGPTIKDGFYYDFSTDHIFSSNELEKIEEKMREIIKKNESFIREVWTREEAIRFFSNKGEDYKVKIIAKIPIHENITVYKQGSFIDLCRGPHAPSTKISKAFKLTKVSGSYWEGNTNNAQLQRIYGTAWRTEEELKLYLNNLIEVEKRDHRKIGKELELFHIQNEALGQIFWHEKGLIIYRIIENYIRKKLENNGYIEVKTPYLLSKTLWEQSGHWDKFREHMFLSEIDNKVVAIKPMNCPCHVQIFNSKIRSYKDLPLRMAEFGTCHRYEASGALHGLMRVRSFTQDDAHIFCTEDQIIEEALKFCNLLMEVYEVFGFKDILVKFSDRPEKRAGSDKIWDKAEEALKASVKAANLNYVLNPGDGAFYGPKLEFTLKDAIGREWQCGTLQMDFVLPERLGAYYTGSDGKKHHPIMLHRAILGTIERFIGILIEHHSGKLPIWLAPVQLSILTITEDAIDYAISLKHKAMKQNIRAEVDITNEKINYKIRSHISKKIPVLWIIGKKEIETESVSIRYLESKDQHIMSSDKALKTLLSCASI</sequence>
<organism>
    <name type="scientific">Ehrlichia ruminantium (strain Gardel)</name>
    <dbReference type="NCBI Taxonomy" id="302409"/>
    <lineage>
        <taxon>Bacteria</taxon>
        <taxon>Pseudomonadati</taxon>
        <taxon>Pseudomonadota</taxon>
        <taxon>Alphaproteobacteria</taxon>
        <taxon>Rickettsiales</taxon>
        <taxon>Anaplasmataceae</taxon>
        <taxon>Ehrlichia</taxon>
    </lineage>
</organism>
<proteinExistence type="inferred from homology"/>
<dbReference type="EC" id="6.1.1.3" evidence="1"/>
<dbReference type="EMBL" id="CR925677">
    <property type="protein sequence ID" value="CAI28384.1"/>
    <property type="molecule type" value="Genomic_DNA"/>
</dbReference>
<dbReference type="RefSeq" id="WP_011255976.1">
    <property type="nucleotide sequence ID" value="NC_006831.1"/>
</dbReference>
<dbReference type="SMR" id="Q5FGP1"/>
<dbReference type="KEGG" id="erg:ERGA_CDS_09320"/>
<dbReference type="HOGENOM" id="CLU_008554_0_1_5"/>
<dbReference type="OrthoDB" id="9802304at2"/>
<dbReference type="Proteomes" id="UP000000533">
    <property type="component" value="Chromosome"/>
</dbReference>
<dbReference type="GO" id="GO:0005737">
    <property type="term" value="C:cytoplasm"/>
    <property type="evidence" value="ECO:0007669"/>
    <property type="project" value="UniProtKB-SubCell"/>
</dbReference>
<dbReference type="GO" id="GO:0005524">
    <property type="term" value="F:ATP binding"/>
    <property type="evidence" value="ECO:0007669"/>
    <property type="project" value="UniProtKB-UniRule"/>
</dbReference>
<dbReference type="GO" id="GO:0046872">
    <property type="term" value="F:metal ion binding"/>
    <property type="evidence" value="ECO:0007669"/>
    <property type="project" value="UniProtKB-KW"/>
</dbReference>
<dbReference type="GO" id="GO:0004829">
    <property type="term" value="F:threonine-tRNA ligase activity"/>
    <property type="evidence" value="ECO:0007669"/>
    <property type="project" value="UniProtKB-UniRule"/>
</dbReference>
<dbReference type="GO" id="GO:0000049">
    <property type="term" value="F:tRNA binding"/>
    <property type="evidence" value="ECO:0007669"/>
    <property type="project" value="UniProtKB-KW"/>
</dbReference>
<dbReference type="GO" id="GO:0006435">
    <property type="term" value="P:threonyl-tRNA aminoacylation"/>
    <property type="evidence" value="ECO:0007669"/>
    <property type="project" value="UniProtKB-UniRule"/>
</dbReference>
<dbReference type="CDD" id="cd01667">
    <property type="entry name" value="TGS_ThrRS"/>
    <property type="match status" value="1"/>
</dbReference>
<dbReference type="CDD" id="cd00860">
    <property type="entry name" value="ThrRS_anticodon"/>
    <property type="match status" value="1"/>
</dbReference>
<dbReference type="CDD" id="cd00771">
    <property type="entry name" value="ThrRS_core"/>
    <property type="match status" value="1"/>
</dbReference>
<dbReference type="FunFam" id="3.30.54.20:FF:000002">
    <property type="entry name" value="Threonine--tRNA ligase"/>
    <property type="match status" value="1"/>
</dbReference>
<dbReference type="FunFam" id="3.30.930.10:FF:000002">
    <property type="entry name" value="Threonine--tRNA ligase"/>
    <property type="match status" value="1"/>
</dbReference>
<dbReference type="FunFam" id="3.40.50.800:FF:000001">
    <property type="entry name" value="Threonine--tRNA ligase"/>
    <property type="match status" value="1"/>
</dbReference>
<dbReference type="FunFam" id="3.30.980.10:FF:000005">
    <property type="entry name" value="Threonyl-tRNA synthetase, mitochondrial"/>
    <property type="match status" value="1"/>
</dbReference>
<dbReference type="Gene3D" id="3.10.20.30">
    <property type="match status" value="1"/>
</dbReference>
<dbReference type="Gene3D" id="3.30.54.20">
    <property type="match status" value="1"/>
</dbReference>
<dbReference type="Gene3D" id="3.40.50.800">
    <property type="entry name" value="Anticodon-binding domain"/>
    <property type="match status" value="1"/>
</dbReference>
<dbReference type="Gene3D" id="3.30.930.10">
    <property type="entry name" value="Bira Bifunctional Protein, Domain 2"/>
    <property type="match status" value="1"/>
</dbReference>
<dbReference type="Gene3D" id="3.30.980.10">
    <property type="entry name" value="Threonyl-trna Synthetase, Chain A, domain 2"/>
    <property type="match status" value="1"/>
</dbReference>
<dbReference type="HAMAP" id="MF_00184">
    <property type="entry name" value="Thr_tRNA_synth"/>
    <property type="match status" value="1"/>
</dbReference>
<dbReference type="InterPro" id="IPR002314">
    <property type="entry name" value="aa-tRNA-synt_IIb"/>
</dbReference>
<dbReference type="InterPro" id="IPR006195">
    <property type="entry name" value="aa-tRNA-synth_II"/>
</dbReference>
<dbReference type="InterPro" id="IPR045864">
    <property type="entry name" value="aa-tRNA-synth_II/BPL/LPL"/>
</dbReference>
<dbReference type="InterPro" id="IPR004154">
    <property type="entry name" value="Anticodon-bd"/>
</dbReference>
<dbReference type="InterPro" id="IPR036621">
    <property type="entry name" value="Anticodon-bd_dom_sf"/>
</dbReference>
<dbReference type="InterPro" id="IPR012675">
    <property type="entry name" value="Beta-grasp_dom_sf"/>
</dbReference>
<dbReference type="InterPro" id="IPR004095">
    <property type="entry name" value="TGS"/>
</dbReference>
<dbReference type="InterPro" id="IPR012676">
    <property type="entry name" value="TGS-like"/>
</dbReference>
<dbReference type="InterPro" id="IPR002320">
    <property type="entry name" value="Thr-tRNA-ligase_IIa"/>
</dbReference>
<dbReference type="InterPro" id="IPR018163">
    <property type="entry name" value="Thr/Ala-tRNA-synth_IIc_edit"/>
</dbReference>
<dbReference type="InterPro" id="IPR047246">
    <property type="entry name" value="ThrRS_anticodon"/>
</dbReference>
<dbReference type="InterPro" id="IPR033728">
    <property type="entry name" value="ThrRS_core"/>
</dbReference>
<dbReference type="InterPro" id="IPR012947">
    <property type="entry name" value="tRNA_SAD"/>
</dbReference>
<dbReference type="NCBIfam" id="TIGR00418">
    <property type="entry name" value="thrS"/>
    <property type="match status" value="1"/>
</dbReference>
<dbReference type="PANTHER" id="PTHR11451:SF44">
    <property type="entry name" value="THREONINE--TRNA LIGASE, CHLOROPLASTIC_MITOCHONDRIAL 2"/>
    <property type="match status" value="1"/>
</dbReference>
<dbReference type="PANTHER" id="PTHR11451">
    <property type="entry name" value="THREONINE-TRNA LIGASE"/>
    <property type="match status" value="1"/>
</dbReference>
<dbReference type="Pfam" id="PF03129">
    <property type="entry name" value="HGTP_anticodon"/>
    <property type="match status" value="1"/>
</dbReference>
<dbReference type="Pfam" id="PF00587">
    <property type="entry name" value="tRNA-synt_2b"/>
    <property type="match status" value="1"/>
</dbReference>
<dbReference type="Pfam" id="PF07973">
    <property type="entry name" value="tRNA_SAD"/>
    <property type="match status" value="1"/>
</dbReference>
<dbReference type="PRINTS" id="PR01047">
    <property type="entry name" value="TRNASYNTHTHR"/>
</dbReference>
<dbReference type="SMART" id="SM00863">
    <property type="entry name" value="tRNA_SAD"/>
    <property type="match status" value="1"/>
</dbReference>
<dbReference type="SUPFAM" id="SSF52954">
    <property type="entry name" value="Class II aaRS ABD-related"/>
    <property type="match status" value="1"/>
</dbReference>
<dbReference type="SUPFAM" id="SSF55681">
    <property type="entry name" value="Class II aaRS and biotin synthetases"/>
    <property type="match status" value="1"/>
</dbReference>
<dbReference type="SUPFAM" id="SSF81271">
    <property type="entry name" value="TGS-like"/>
    <property type="match status" value="1"/>
</dbReference>
<dbReference type="SUPFAM" id="SSF55186">
    <property type="entry name" value="ThrRS/AlaRS common domain"/>
    <property type="match status" value="1"/>
</dbReference>
<dbReference type="PROSITE" id="PS50862">
    <property type="entry name" value="AA_TRNA_LIGASE_II"/>
    <property type="match status" value="1"/>
</dbReference>
<dbReference type="PROSITE" id="PS51880">
    <property type="entry name" value="TGS"/>
    <property type="match status" value="1"/>
</dbReference>
<feature type="chain" id="PRO_0000100976" description="Threonine--tRNA ligase">
    <location>
        <begin position="1"/>
        <end position="633"/>
    </location>
</feature>
<feature type="domain" description="TGS" evidence="2">
    <location>
        <begin position="1"/>
        <end position="61"/>
    </location>
</feature>
<feature type="region of interest" description="Catalytic" evidence="1">
    <location>
        <begin position="242"/>
        <end position="533"/>
    </location>
</feature>
<feature type="binding site" evidence="1">
    <location>
        <position position="333"/>
    </location>
    <ligand>
        <name>Zn(2+)</name>
        <dbReference type="ChEBI" id="CHEBI:29105"/>
    </ligand>
</feature>
<feature type="binding site" evidence="1">
    <location>
        <position position="384"/>
    </location>
    <ligand>
        <name>Zn(2+)</name>
        <dbReference type="ChEBI" id="CHEBI:29105"/>
    </ligand>
</feature>
<feature type="binding site" evidence="1">
    <location>
        <position position="510"/>
    </location>
    <ligand>
        <name>Zn(2+)</name>
        <dbReference type="ChEBI" id="CHEBI:29105"/>
    </ligand>
</feature>
<reference key="1">
    <citation type="journal article" date="2006" name="J. Bacteriol.">
        <title>Comparative genomic analysis of three strains of Ehrlichia ruminantium reveals an active process of genome size plasticity.</title>
        <authorList>
            <person name="Frutos R."/>
            <person name="Viari A."/>
            <person name="Ferraz C."/>
            <person name="Morgat A."/>
            <person name="Eychenie S."/>
            <person name="Kandassamy Y."/>
            <person name="Chantal I."/>
            <person name="Bensaid A."/>
            <person name="Coissac E."/>
            <person name="Vachiery N."/>
            <person name="Demaille J."/>
            <person name="Martinez D."/>
        </authorList>
    </citation>
    <scope>NUCLEOTIDE SEQUENCE [LARGE SCALE GENOMIC DNA]</scope>
    <source>
        <strain>Gardel</strain>
    </source>
</reference>
<keyword id="KW-0030">Aminoacyl-tRNA synthetase</keyword>
<keyword id="KW-0067">ATP-binding</keyword>
<keyword id="KW-0963">Cytoplasm</keyword>
<keyword id="KW-0436">Ligase</keyword>
<keyword id="KW-0479">Metal-binding</keyword>
<keyword id="KW-0547">Nucleotide-binding</keyword>
<keyword id="KW-0648">Protein biosynthesis</keyword>
<keyword id="KW-0694">RNA-binding</keyword>
<keyword id="KW-0820">tRNA-binding</keyword>
<keyword id="KW-0862">Zinc</keyword>
<comment type="function">
    <text evidence="1">Catalyzes the attachment of threonine to tRNA(Thr) in a two-step reaction: L-threonine is first activated by ATP to form Thr-AMP and then transferred to the acceptor end of tRNA(Thr). Also edits incorrectly charged L-seryl-tRNA(Thr).</text>
</comment>
<comment type="catalytic activity">
    <reaction evidence="1">
        <text>tRNA(Thr) + L-threonine + ATP = L-threonyl-tRNA(Thr) + AMP + diphosphate + H(+)</text>
        <dbReference type="Rhea" id="RHEA:24624"/>
        <dbReference type="Rhea" id="RHEA-COMP:9670"/>
        <dbReference type="Rhea" id="RHEA-COMP:9704"/>
        <dbReference type="ChEBI" id="CHEBI:15378"/>
        <dbReference type="ChEBI" id="CHEBI:30616"/>
        <dbReference type="ChEBI" id="CHEBI:33019"/>
        <dbReference type="ChEBI" id="CHEBI:57926"/>
        <dbReference type="ChEBI" id="CHEBI:78442"/>
        <dbReference type="ChEBI" id="CHEBI:78534"/>
        <dbReference type="ChEBI" id="CHEBI:456215"/>
        <dbReference type="EC" id="6.1.1.3"/>
    </reaction>
</comment>
<comment type="cofactor">
    <cofactor evidence="1">
        <name>Zn(2+)</name>
        <dbReference type="ChEBI" id="CHEBI:29105"/>
    </cofactor>
    <text evidence="1">Binds 1 zinc ion per subunit.</text>
</comment>
<comment type="subunit">
    <text evidence="1">Homodimer.</text>
</comment>
<comment type="subcellular location">
    <subcellularLocation>
        <location evidence="1">Cytoplasm</location>
    </subcellularLocation>
</comment>
<comment type="similarity">
    <text evidence="1">Belongs to the class-II aminoacyl-tRNA synthetase family.</text>
</comment>
<name>SYT_EHRRG</name>
<accession>Q5FGP1</accession>
<gene>
    <name evidence="1" type="primary">thrS</name>
    <name type="ordered locus">ERGA_CDS_09320</name>
</gene>
<evidence type="ECO:0000255" key="1">
    <source>
        <dbReference type="HAMAP-Rule" id="MF_00184"/>
    </source>
</evidence>
<evidence type="ECO:0000255" key="2">
    <source>
        <dbReference type="PROSITE-ProRule" id="PRU01228"/>
    </source>
</evidence>
<protein>
    <recommendedName>
        <fullName evidence="1">Threonine--tRNA ligase</fullName>
        <ecNumber evidence="1">6.1.1.3</ecNumber>
    </recommendedName>
    <alternativeName>
        <fullName evidence="1">Threonyl-tRNA synthetase</fullName>
        <shortName evidence="1">ThrRS</shortName>
    </alternativeName>
</protein>